<dbReference type="EMBL" id="CP001790">
    <property type="protein sequence ID" value="ACX89978.1"/>
    <property type="molecule type" value="Genomic_DNA"/>
</dbReference>
<dbReference type="RefSeq" id="WP_015731436.1">
    <property type="nucleotide sequence ID" value="NC_013421.1"/>
</dbReference>
<dbReference type="SMR" id="D0KC90"/>
<dbReference type="KEGG" id="pwa:Pecwa_4254"/>
<dbReference type="eggNOG" id="COG4948">
    <property type="taxonomic scope" value="Bacteria"/>
</dbReference>
<dbReference type="HOGENOM" id="CLU_030273_6_1_6"/>
<dbReference type="GO" id="GO:0000287">
    <property type="term" value="F:magnesium ion binding"/>
    <property type="evidence" value="ECO:0000250"/>
    <property type="project" value="UniProtKB"/>
</dbReference>
<dbReference type="GO" id="GO:0009063">
    <property type="term" value="P:amino acid catabolic process"/>
    <property type="evidence" value="ECO:0007669"/>
    <property type="project" value="InterPro"/>
</dbReference>
<dbReference type="CDD" id="cd03322">
    <property type="entry name" value="RspA"/>
    <property type="match status" value="1"/>
</dbReference>
<dbReference type="FunFam" id="3.20.20.120:FF:000011">
    <property type="entry name" value="D-galactonate dehydratase family member VSWAT3_13707"/>
    <property type="match status" value="1"/>
</dbReference>
<dbReference type="FunFam" id="3.30.390.10:FF:000002">
    <property type="entry name" value="D-galactonate dehydratase family protein"/>
    <property type="match status" value="1"/>
</dbReference>
<dbReference type="Gene3D" id="3.20.20.120">
    <property type="entry name" value="Enolase-like C-terminal domain"/>
    <property type="match status" value="1"/>
</dbReference>
<dbReference type="Gene3D" id="3.30.390.10">
    <property type="entry name" value="Enolase-like, N-terminal domain"/>
    <property type="match status" value="1"/>
</dbReference>
<dbReference type="InterPro" id="IPR034589">
    <property type="entry name" value="D-mannonate_dehydratase-like"/>
</dbReference>
<dbReference type="InterPro" id="IPR034593">
    <property type="entry name" value="DgoD-like"/>
</dbReference>
<dbReference type="InterPro" id="IPR036849">
    <property type="entry name" value="Enolase-like_C_sf"/>
</dbReference>
<dbReference type="InterPro" id="IPR029017">
    <property type="entry name" value="Enolase-like_N"/>
</dbReference>
<dbReference type="InterPro" id="IPR029065">
    <property type="entry name" value="Enolase_C-like"/>
</dbReference>
<dbReference type="InterPro" id="IPR018110">
    <property type="entry name" value="Mandel_Rmase/mucon_lact_enz_CS"/>
</dbReference>
<dbReference type="InterPro" id="IPR013342">
    <property type="entry name" value="Mandelate_racemase_C"/>
</dbReference>
<dbReference type="InterPro" id="IPR013341">
    <property type="entry name" value="Mandelate_racemase_N_dom"/>
</dbReference>
<dbReference type="PANTHER" id="PTHR48080">
    <property type="entry name" value="D-GALACTONATE DEHYDRATASE-RELATED"/>
    <property type="match status" value="1"/>
</dbReference>
<dbReference type="PANTHER" id="PTHR48080:SF6">
    <property type="entry name" value="STARVATION-SENSING PROTEIN RSPA"/>
    <property type="match status" value="1"/>
</dbReference>
<dbReference type="Pfam" id="PF13378">
    <property type="entry name" value="MR_MLE_C"/>
    <property type="match status" value="1"/>
</dbReference>
<dbReference type="Pfam" id="PF02746">
    <property type="entry name" value="MR_MLE_N"/>
    <property type="match status" value="1"/>
</dbReference>
<dbReference type="SFLD" id="SFLDS00001">
    <property type="entry name" value="Enolase"/>
    <property type="match status" value="1"/>
</dbReference>
<dbReference type="SFLD" id="SFLDG00033">
    <property type="entry name" value="mannonate_dehydratase"/>
    <property type="match status" value="1"/>
</dbReference>
<dbReference type="SMART" id="SM00922">
    <property type="entry name" value="MR_MLE"/>
    <property type="match status" value="1"/>
</dbReference>
<dbReference type="SUPFAM" id="SSF51604">
    <property type="entry name" value="Enolase C-terminal domain-like"/>
    <property type="match status" value="1"/>
</dbReference>
<dbReference type="SUPFAM" id="SSF54826">
    <property type="entry name" value="Enolase N-terminal domain-like"/>
    <property type="match status" value="1"/>
</dbReference>
<dbReference type="PROSITE" id="PS00908">
    <property type="entry name" value="MR_MLE_1"/>
    <property type="match status" value="1"/>
</dbReference>
<evidence type="ECO:0000250" key="1"/>
<evidence type="ECO:0000269" key="2">
    <source>
    </source>
</evidence>
<evidence type="ECO:0000305" key="3"/>
<comment type="function">
    <text evidence="2">Has no detectable activity with D-mannonate and with a panel of 70 other acid sugars (in vitro), in spite of the conservation of the residues that are expected to be important for catalytic activity and cofactor binding. May have evolved a divergent function.</text>
</comment>
<comment type="similarity">
    <text evidence="3">Belongs to the mandelate racemase/muconate lactonizing enzyme family. GalD subfamily.</text>
</comment>
<organism>
    <name type="scientific">Pectobacterium parmentieri (strain WPP163)</name>
    <name type="common">Pectobacterium wasabiae (strain WPP163)</name>
    <dbReference type="NCBI Taxonomy" id="561231"/>
    <lineage>
        <taxon>Bacteria</taxon>
        <taxon>Pseudomonadati</taxon>
        <taxon>Pseudomonadota</taxon>
        <taxon>Gammaproteobacteria</taxon>
        <taxon>Enterobacterales</taxon>
        <taxon>Pectobacteriaceae</taxon>
        <taxon>Pectobacterium</taxon>
    </lineage>
</organism>
<proteinExistence type="inferred from homology"/>
<keyword id="KW-0460">Magnesium</keyword>
<keyword id="KW-0479">Metal-binding</keyword>
<gene>
    <name type="ordered locus">Pecwa_4254</name>
</gene>
<reference key="1">
    <citation type="submission" date="2009-10" db="EMBL/GenBank/DDBJ databases">
        <title>Complete sequence of Pectobacterium wasabiae WPP163.</title>
        <authorList>
            <consortium name="US DOE Joint Genome Institute"/>
            <person name="Lucas S."/>
            <person name="Copeland A."/>
            <person name="Lapidus A."/>
            <person name="Glavina del Rio T."/>
            <person name="Tice H."/>
            <person name="Bruce D."/>
            <person name="Goodwin L."/>
            <person name="Pitluck S."/>
            <person name="Chertkov O."/>
            <person name="Brettin T."/>
            <person name="Detter J.C."/>
            <person name="Han C."/>
            <person name="Larimer F."/>
            <person name="Land M."/>
            <person name="Hauser L."/>
            <person name="Kyrpides N."/>
            <person name="Ovchinnikova G."/>
            <person name="Balakrishnan V."/>
            <person name="Glasner J."/>
            <person name="Perna N.T."/>
        </authorList>
    </citation>
    <scope>NUCLEOTIDE SEQUENCE [LARGE SCALE GENOMIC DNA]</scope>
    <source>
        <strain>WPP163</strain>
    </source>
</reference>
<reference key="2">
    <citation type="journal article" date="2014" name="Biochemistry">
        <title>Discovery of function in the enolase superfamily: D-mannonate and D-gluconate dehydratases in the D-mannonate dehydratase subgroup.</title>
        <authorList>
            <person name="Wichelecki D.J."/>
            <person name="Balthazor B.M."/>
            <person name="Chau A.C."/>
            <person name="Vetting M.W."/>
            <person name="Fedorov A.A."/>
            <person name="Fedorov E.V."/>
            <person name="Lukk T."/>
            <person name="Patskovsky Y.V."/>
            <person name="Stead M.B."/>
            <person name="Hillerich B.S."/>
            <person name="Seidel R.D."/>
            <person name="Almo S.C."/>
            <person name="Gerlt J.A."/>
        </authorList>
    </citation>
    <scope>FUNCTION</scope>
    <scope>LACK OF D-MANNONATE DEHYDRATASE ACTIVITY</scope>
    <source>
        <strain>WPP163</strain>
    </source>
</reference>
<accession>D0KC90</accession>
<protein>
    <recommendedName>
        <fullName>D-galactonate dehydratase family member Pecwa_4254</fullName>
    </recommendedName>
</protein>
<sequence length="399" mass="45150">MLPTIITDIECLVTRPDRHNLVTVVVHTNKGVTGYGCATFQQRPLAVKAMVDEYLKPLLVGRDANHIEDLWHMMMVNAYWRNGPVINNAVAGVDMALWDIKGKLADMPLYHLFGGKSRDAIAAYSHAASDTLDGLYQEVERLYAQGYRHIRCQLGFYGGNPDALHSTRQPTEGAYYDQDQYMANTLAMFRALREKYGDRFHILHDVHERLFPNQAVQFAKAVETYRPYFIEDILPPAQNEWLAQIRSQSAVPLATGELFNNPAEWQNLVINRQVDFIRCHVSQIGGITPALKLGVFCQNFGVRLAWHCPPDMTPIGAAVNIHLNIHLHNAAIQEFVAYPENTRKVFPQAVEPENGYLYPIERPGIGVGIDLDAARQFPVVYRPHEWTQSRLPDGTIHTP</sequence>
<feature type="chain" id="PRO_0000429913" description="D-galactonate dehydratase family member Pecwa_4254">
    <location>
        <begin position="1"/>
        <end position="399"/>
    </location>
</feature>
<feature type="binding site" evidence="1">
    <location>
        <position position="205"/>
    </location>
    <ligand>
        <name>Mg(2+)</name>
        <dbReference type="ChEBI" id="CHEBI:18420"/>
    </ligand>
</feature>
<feature type="binding site" evidence="1">
    <location>
        <position position="207"/>
    </location>
    <ligand>
        <name>D-arabinonate</name>
        <dbReference type="ChEBI" id="CHEBI:16157"/>
    </ligand>
</feature>
<feature type="binding site" evidence="1">
    <location>
        <position position="231"/>
    </location>
    <ligand>
        <name>Mg(2+)</name>
        <dbReference type="ChEBI" id="CHEBI:18420"/>
    </ligand>
</feature>
<feature type="binding site" evidence="1">
    <location>
        <position position="257"/>
    </location>
    <ligand>
        <name>D-arabinonate</name>
        <dbReference type="ChEBI" id="CHEBI:16157"/>
    </ligand>
</feature>
<feature type="binding site" evidence="1">
    <location>
        <position position="257"/>
    </location>
    <ligand>
        <name>Mg(2+)</name>
        <dbReference type="ChEBI" id="CHEBI:18420"/>
    </ligand>
</feature>
<feature type="binding site" evidence="1">
    <location>
        <position position="278"/>
    </location>
    <ligand>
        <name>D-arabinonate</name>
        <dbReference type="ChEBI" id="CHEBI:16157"/>
    </ligand>
</feature>
<feature type="binding site" evidence="1">
    <location>
        <position position="307"/>
    </location>
    <ligand>
        <name>D-arabinonate</name>
        <dbReference type="ChEBI" id="CHEBI:16157"/>
    </ligand>
</feature>
<feature type="binding site" evidence="1">
    <location>
        <position position="334"/>
    </location>
    <ligand>
        <name>D-arabinonate</name>
        <dbReference type="ChEBI" id="CHEBI:16157"/>
    </ligand>
</feature>
<name>IMAND_PECPW</name>